<protein>
    <recommendedName>
        <fullName evidence="1">2-C-methyl-D-erythritol 4-phosphate cytidylyltransferase</fullName>
        <ecNumber evidence="1">2.7.7.60</ecNumber>
    </recommendedName>
    <alternativeName>
        <fullName evidence="1">4-diphosphocytidyl-2C-methyl-D-erythritol synthase</fullName>
    </alternativeName>
    <alternativeName>
        <fullName evidence="1">MEP cytidylyltransferase</fullName>
        <shortName evidence="1">MCT</shortName>
    </alternativeName>
</protein>
<accession>B9MJW2</accession>
<comment type="function">
    <text evidence="1">Catalyzes the formation of 4-diphosphocytidyl-2-C-methyl-D-erythritol from CTP and 2-C-methyl-D-erythritol 4-phosphate (MEP).</text>
</comment>
<comment type="catalytic activity">
    <reaction evidence="1">
        <text>2-C-methyl-D-erythritol 4-phosphate + CTP + H(+) = 4-CDP-2-C-methyl-D-erythritol + diphosphate</text>
        <dbReference type="Rhea" id="RHEA:13429"/>
        <dbReference type="ChEBI" id="CHEBI:15378"/>
        <dbReference type="ChEBI" id="CHEBI:33019"/>
        <dbReference type="ChEBI" id="CHEBI:37563"/>
        <dbReference type="ChEBI" id="CHEBI:57823"/>
        <dbReference type="ChEBI" id="CHEBI:58262"/>
        <dbReference type="EC" id="2.7.7.60"/>
    </reaction>
</comment>
<comment type="pathway">
    <text evidence="1">Isoprenoid biosynthesis; isopentenyl diphosphate biosynthesis via DXP pathway; isopentenyl diphosphate from 1-deoxy-D-xylulose 5-phosphate: step 2/6.</text>
</comment>
<comment type="similarity">
    <text evidence="1">Belongs to the IspD/TarI cytidylyltransferase family. IspD subfamily.</text>
</comment>
<gene>
    <name evidence="1" type="primary">ispD</name>
    <name type="ordered locus">Athe_1522</name>
</gene>
<sequence>MKTCAILCAAGKGTRFGGNTPKQFLFLKNKMIIEYSLEVFEKSHFIDGIVLLVPQGFEDIARYLKDKFSKVIFWDYGGNERADTVKRGLEILKGECDIVAIHDSARPFITLELLEKLIADVETHFAVAPGILANDTVKFVVDGHIQNTLPRSNICLIQTPQVFKFDLIYRGYEMFKNELFTDDLQYVERLGIKPKIIENSRINFKITTKEDLLIAEAIVEKGYW</sequence>
<keyword id="KW-0414">Isoprene biosynthesis</keyword>
<keyword id="KW-0548">Nucleotidyltransferase</keyword>
<keyword id="KW-0808">Transferase</keyword>
<organism>
    <name type="scientific">Caldicellulosiruptor bescii (strain ATCC BAA-1888 / DSM 6725 / KCTC 15123 / Z-1320)</name>
    <name type="common">Anaerocellum thermophilum</name>
    <dbReference type="NCBI Taxonomy" id="521460"/>
    <lineage>
        <taxon>Bacteria</taxon>
        <taxon>Bacillati</taxon>
        <taxon>Bacillota</taxon>
        <taxon>Bacillota incertae sedis</taxon>
        <taxon>Caldicellulosiruptorales</taxon>
        <taxon>Caldicellulosiruptoraceae</taxon>
        <taxon>Caldicellulosiruptor</taxon>
    </lineage>
</organism>
<reference key="1">
    <citation type="submission" date="2009-01" db="EMBL/GenBank/DDBJ databases">
        <title>Complete sequence of chromosome of Caldicellulosiruptor becscii DSM 6725.</title>
        <authorList>
            <person name="Lucas S."/>
            <person name="Copeland A."/>
            <person name="Lapidus A."/>
            <person name="Glavina del Rio T."/>
            <person name="Tice H."/>
            <person name="Bruce D."/>
            <person name="Goodwin L."/>
            <person name="Pitluck S."/>
            <person name="Sims D."/>
            <person name="Meincke L."/>
            <person name="Brettin T."/>
            <person name="Detter J.C."/>
            <person name="Han C."/>
            <person name="Larimer F."/>
            <person name="Land M."/>
            <person name="Hauser L."/>
            <person name="Kyrpides N."/>
            <person name="Ovchinnikova G."/>
            <person name="Kataeva I."/>
            <person name="Adams M.W.W."/>
        </authorList>
    </citation>
    <scope>NUCLEOTIDE SEQUENCE [LARGE SCALE GENOMIC DNA]</scope>
    <source>
        <strain>ATCC BAA-1888 / DSM 6725 / KCTC 15123 / Z-1320</strain>
    </source>
</reference>
<evidence type="ECO:0000255" key="1">
    <source>
        <dbReference type="HAMAP-Rule" id="MF_00108"/>
    </source>
</evidence>
<proteinExistence type="inferred from homology"/>
<name>ISPD_CALBD</name>
<dbReference type="EC" id="2.7.7.60" evidence="1"/>
<dbReference type="EMBL" id="CP001393">
    <property type="protein sequence ID" value="ACM60620.1"/>
    <property type="molecule type" value="Genomic_DNA"/>
</dbReference>
<dbReference type="RefSeq" id="WP_015907972.1">
    <property type="nucleotide sequence ID" value="NC_012034.1"/>
</dbReference>
<dbReference type="SMR" id="B9MJW2"/>
<dbReference type="STRING" id="521460.Athe_1522"/>
<dbReference type="GeneID" id="31772872"/>
<dbReference type="KEGG" id="ate:Athe_1522"/>
<dbReference type="eggNOG" id="COG1211">
    <property type="taxonomic scope" value="Bacteria"/>
</dbReference>
<dbReference type="HOGENOM" id="CLU_061281_2_2_9"/>
<dbReference type="UniPathway" id="UPA00056">
    <property type="reaction ID" value="UER00093"/>
</dbReference>
<dbReference type="Proteomes" id="UP000007723">
    <property type="component" value="Chromosome"/>
</dbReference>
<dbReference type="GO" id="GO:0050518">
    <property type="term" value="F:2-C-methyl-D-erythritol 4-phosphate cytidylyltransferase activity"/>
    <property type="evidence" value="ECO:0007669"/>
    <property type="project" value="UniProtKB-UniRule"/>
</dbReference>
<dbReference type="GO" id="GO:0019288">
    <property type="term" value="P:isopentenyl diphosphate biosynthetic process, methylerythritol 4-phosphate pathway"/>
    <property type="evidence" value="ECO:0007669"/>
    <property type="project" value="UniProtKB-UniRule"/>
</dbReference>
<dbReference type="CDD" id="cd02516">
    <property type="entry name" value="CDP-ME_synthetase"/>
    <property type="match status" value="1"/>
</dbReference>
<dbReference type="FunFam" id="3.90.550.10:FF:000003">
    <property type="entry name" value="2-C-methyl-D-erythritol 4-phosphate cytidylyltransferase"/>
    <property type="match status" value="1"/>
</dbReference>
<dbReference type="Gene3D" id="3.90.550.10">
    <property type="entry name" value="Spore Coat Polysaccharide Biosynthesis Protein SpsA, Chain A"/>
    <property type="match status" value="1"/>
</dbReference>
<dbReference type="HAMAP" id="MF_00108">
    <property type="entry name" value="IspD"/>
    <property type="match status" value="1"/>
</dbReference>
<dbReference type="InterPro" id="IPR001228">
    <property type="entry name" value="IspD"/>
</dbReference>
<dbReference type="InterPro" id="IPR034683">
    <property type="entry name" value="IspD/TarI"/>
</dbReference>
<dbReference type="InterPro" id="IPR050088">
    <property type="entry name" value="IspD/TarI_cytidylyltransf_bact"/>
</dbReference>
<dbReference type="InterPro" id="IPR029044">
    <property type="entry name" value="Nucleotide-diphossugar_trans"/>
</dbReference>
<dbReference type="NCBIfam" id="TIGR00453">
    <property type="entry name" value="ispD"/>
    <property type="match status" value="1"/>
</dbReference>
<dbReference type="PANTHER" id="PTHR32125">
    <property type="entry name" value="2-C-METHYL-D-ERYTHRITOL 4-PHOSPHATE CYTIDYLYLTRANSFERASE, CHLOROPLASTIC"/>
    <property type="match status" value="1"/>
</dbReference>
<dbReference type="PANTHER" id="PTHR32125:SF4">
    <property type="entry name" value="2-C-METHYL-D-ERYTHRITOL 4-PHOSPHATE CYTIDYLYLTRANSFERASE, CHLOROPLASTIC"/>
    <property type="match status" value="1"/>
</dbReference>
<dbReference type="Pfam" id="PF01128">
    <property type="entry name" value="IspD"/>
    <property type="match status" value="1"/>
</dbReference>
<dbReference type="SUPFAM" id="SSF53448">
    <property type="entry name" value="Nucleotide-diphospho-sugar transferases"/>
    <property type="match status" value="1"/>
</dbReference>
<feature type="chain" id="PRO_1000191049" description="2-C-methyl-D-erythritol 4-phosphate cytidylyltransferase">
    <location>
        <begin position="1"/>
        <end position="224"/>
    </location>
</feature>
<feature type="site" description="Transition state stabilizer" evidence="1">
    <location>
        <position position="15"/>
    </location>
</feature>
<feature type="site" description="Transition state stabilizer" evidence="1">
    <location>
        <position position="22"/>
    </location>
</feature>
<feature type="site" description="Positions MEP for the nucleophilic attack" evidence="1">
    <location>
        <position position="151"/>
    </location>
</feature>
<feature type="site" description="Positions MEP for the nucleophilic attack" evidence="1">
    <location>
        <position position="205"/>
    </location>
</feature>